<name>CROC_DROME</name>
<accession>P32027</accession>
<accession>Q9VP32</accession>
<protein>
    <recommendedName>
        <fullName>Fork head domain-containing protein crocodile</fullName>
    </recommendedName>
    <alternativeName>
        <fullName>FKH protein FD1</fullName>
    </alternativeName>
</protein>
<feature type="chain" id="PRO_0000091909" description="Fork head domain-containing protein crocodile">
    <location>
        <begin position="1"/>
        <end position="508"/>
    </location>
</feature>
<feature type="DNA-binding region" description="Fork-head" evidence="1">
    <location>
        <begin position="69"/>
        <end position="160"/>
    </location>
</feature>
<feature type="region of interest" description="Disordered" evidence="2">
    <location>
        <begin position="319"/>
        <end position="412"/>
    </location>
</feature>
<feature type="compositionally biased region" description="Low complexity" evidence="2">
    <location>
        <begin position="375"/>
        <end position="389"/>
    </location>
</feature>
<feature type="compositionally biased region" description="Gly residues" evidence="2">
    <location>
        <begin position="390"/>
        <end position="404"/>
    </location>
</feature>
<feature type="sequence variant" description="In allele CROC-75-3.">
    <original>L</original>
    <variation>F</variation>
    <location>
        <position position="122"/>
    </location>
</feature>
<feature type="sequence variant" description="In allele CROC-75-3.">
    <original>A</original>
    <variation>V</variation>
    <location>
        <position position="453"/>
    </location>
</feature>
<dbReference type="EMBL" id="S80254">
    <property type="protein sequence ID" value="AAB35643.1"/>
    <property type="molecule type" value="Unassigned_DNA"/>
</dbReference>
<dbReference type="EMBL" id="AE014296">
    <property type="protein sequence ID" value="AAF51727.1"/>
    <property type="molecule type" value="Genomic_DNA"/>
</dbReference>
<dbReference type="EMBL" id="M96440">
    <property type="protein sequence ID" value="AAF02177.1"/>
    <property type="molecule type" value="Genomic_DNA"/>
</dbReference>
<dbReference type="PIR" id="S59870">
    <property type="entry name" value="S59870"/>
</dbReference>
<dbReference type="RefSeq" id="NP_524202.1">
    <property type="nucleotide sequence ID" value="NM_079478.4"/>
</dbReference>
<dbReference type="SMR" id="P32027"/>
<dbReference type="BioGRID" id="65621">
    <property type="interactions" value="25"/>
</dbReference>
<dbReference type="FunCoup" id="P32027">
    <property type="interactions" value="155"/>
</dbReference>
<dbReference type="IntAct" id="P32027">
    <property type="interactions" value="22"/>
</dbReference>
<dbReference type="STRING" id="7227.FBpp0078049"/>
<dbReference type="PaxDb" id="7227-FBpp0078049"/>
<dbReference type="DNASU" id="40374"/>
<dbReference type="EnsemblMetazoa" id="FBtr0078395">
    <property type="protein sequence ID" value="FBpp0078049"/>
    <property type="gene ID" value="FBgn0014143"/>
</dbReference>
<dbReference type="GeneID" id="40374"/>
<dbReference type="KEGG" id="dme:Dmel_CG5069"/>
<dbReference type="AGR" id="FB:FBgn0014143"/>
<dbReference type="CTD" id="40374"/>
<dbReference type="FlyBase" id="FBgn0014143">
    <property type="gene designation" value="croc"/>
</dbReference>
<dbReference type="VEuPathDB" id="VectorBase:FBgn0014143"/>
<dbReference type="eggNOG" id="KOG2294">
    <property type="taxonomic scope" value="Eukaryota"/>
</dbReference>
<dbReference type="HOGENOM" id="CLU_035722_0_1_1"/>
<dbReference type="InParanoid" id="P32027"/>
<dbReference type="OMA" id="FTRHYAQ"/>
<dbReference type="OrthoDB" id="5954824at2759"/>
<dbReference type="PhylomeDB" id="P32027"/>
<dbReference type="BioGRID-ORCS" id="40374">
    <property type="hits" value="0 hits in 3 CRISPR screens"/>
</dbReference>
<dbReference type="GenomeRNAi" id="40374"/>
<dbReference type="PRO" id="PR:P32027"/>
<dbReference type="Proteomes" id="UP000000803">
    <property type="component" value="Chromosome 3L"/>
</dbReference>
<dbReference type="Bgee" id="FBgn0014143">
    <property type="expression patterns" value="Expressed in cyst progenitor cell (Drosophila) in testis and 40 other cell types or tissues"/>
</dbReference>
<dbReference type="ExpressionAtlas" id="P32027">
    <property type="expression patterns" value="baseline and differential"/>
</dbReference>
<dbReference type="GO" id="GO:0005634">
    <property type="term" value="C:nucleus"/>
    <property type="evidence" value="ECO:0000314"/>
    <property type="project" value="FlyBase"/>
</dbReference>
<dbReference type="GO" id="GO:0003677">
    <property type="term" value="F:DNA binding"/>
    <property type="evidence" value="ECO:0000314"/>
    <property type="project" value="FlyBase"/>
</dbReference>
<dbReference type="GO" id="GO:0000981">
    <property type="term" value="F:DNA-binding transcription factor activity, RNA polymerase II-specific"/>
    <property type="evidence" value="ECO:0000318"/>
    <property type="project" value="GO_Central"/>
</dbReference>
<dbReference type="GO" id="GO:0000978">
    <property type="term" value="F:RNA polymerase II cis-regulatory region sequence-specific DNA binding"/>
    <property type="evidence" value="ECO:0000318"/>
    <property type="project" value="GO_Central"/>
</dbReference>
<dbReference type="GO" id="GO:0009653">
    <property type="term" value="P:anatomical structure morphogenesis"/>
    <property type="evidence" value="ECO:0000318"/>
    <property type="project" value="GO_Central"/>
</dbReference>
<dbReference type="GO" id="GO:0030154">
    <property type="term" value="P:cell differentiation"/>
    <property type="evidence" value="ECO:0000318"/>
    <property type="project" value="GO_Central"/>
</dbReference>
<dbReference type="GO" id="GO:0006357">
    <property type="term" value="P:regulation of transcription by RNA polymerase II"/>
    <property type="evidence" value="ECO:0000318"/>
    <property type="project" value="GO_Central"/>
</dbReference>
<dbReference type="GO" id="GO:0007380">
    <property type="term" value="P:specification of segmental identity, head"/>
    <property type="evidence" value="ECO:0000315"/>
    <property type="project" value="FlyBase"/>
</dbReference>
<dbReference type="FunFam" id="1.10.10.10:FF:000016">
    <property type="entry name" value="Forkhead box protein I1"/>
    <property type="match status" value="1"/>
</dbReference>
<dbReference type="Gene3D" id="1.10.10.10">
    <property type="entry name" value="Winged helix-like DNA-binding domain superfamily/Winged helix DNA-binding domain"/>
    <property type="match status" value="1"/>
</dbReference>
<dbReference type="InterPro" id="IPR001766">
    <property type="entry name" value="Fork_head_dom"/>
</dbReference>
<dbReference type="InterPro" id="IPR050211">
    <property type="entry name" value="FOX_domain-containing"/>
</dbReference>
<dbReference type="InterPro" id="IPR018122">
    <property type="entry name" value="TF_fork_head_CS_1"/>
</dbReference>
<dbReference type="InterPro" id="IPR030456">
    <property type="entry name" value="TF_fork_head_CS_2"/>
</dbReference>
<dbReference type="InterPro" id="IPR036388">
    <property type="entry name" value="WH-like_DNA-bd_sf"/>
</dbReference>
<dbReference type="InterPro" id="IPR036390">
    <property type="entry name" value="WH_DNA-bd_sf"/>
</dbReference>
<dbReference type="PANTHER" id="PTHR11829:SF388">
    <property type="entry name" value="FORK HEAD DOMAIN-CONTAINING PROTEIN L1-RELATED"/>
    <property type="match status" value="1"/>
</dbReference>
<dbReference type="PANTHER" id="PTHR11829">
    <property type="entry name" value="FORKHEAD BOX PROTEIN"/>
    <property type="match status" value="1"/>
</dbReference>
<dbReference type="Pfam" id="PF00250">
    <property type="entry name" value="Forkhead"/>
    <property type="match status" value="1"/>
</dbReference>
<dbReference type="PRINTS" id="PR00053">
    <property type="entry name" value="FORKHEAD"/>
</dbReference>
<dbReference type="SMART" id="SM00339">
    <property type="entry name" value="FH"/>
    <property type="match status" value="1"/>
</dbReference>
<dbReference type="SUPFAM" id="SSF46785">
    <property type="entry name" value="Winged helix' DNA-binding domain"/>
    <property type="match status" value="1"/>
</dbReference>
<dbReference type="PROSITE" id="PS00657">
    <property type="entry name" value="FORK_HEAD_1"/>
    <property type="match status" value="1"/>
</dbReference>
<dbReference type="PROSITE" id="PS00658">
    <property type="entry name" value="FORK_HEAD_2"/>
    <property type="match status" value="1"/>
</dbReference>
<dbReference type="PROSITE" id="PS50039">
    <property type="entry name" value="FORK_HEAD_3"/>
    <property type="match status" value="1"/>
</dbReference>
<sequence>MHTLFSDQNSFTRHYAQTAAGYGSASAVAAASSASAAAAAHYAYDQYSRYPYSASAYGLGAPHQNKEIVKPPYSYIALIAMAIQNAADKKVTLNGIYQYIMERFPYYRDNKQGWQNSIRHNLSLNECFVKVARDDKKPGKGSYWTLDPDSYNMFDNGSFLRRRRRFKKKDVMREKEEAIKRQAMMNEKLAEMKPLKLMTNGILEAKHMAAHAAHFKKEPLMDLGCLSGKEVSHAAMLNSCHDSLAQMNHLAGGGVEHPGFTVDSLMNVYNPRIHHSAYPYHLNEDNLATVASSQMHHVHHAAAAHHAQQLQRHVAHVAHPLTPGGQGAGGQSSGHSPTTISTPHGPAHGGWYTPETPPSEPVPHNGQQGTPTHPGHNNNNSSSVLNHNGVGNGGGGGGGGGGGSSSVLTSSPTSALGFRDMIFEQNQSCQLDTGSPTGSLQSASPPASASVAAASAAAAAAVISSHHHHHHHHAALSGNLGQLGQLSNLSHYRPHVGHYQEYGIKYGV</sequence>
<comment type="function">
    <text evidence="3">Required for the establishment of head structures. Required to function as an early patterning gene in the anterior-most blastoderm head segment anlage and for the establishment of a specific head skeletal structure that derives from the non-adjacent intercalary segment at a later stage of embryogenesis. Binds the consensus DNA sequence 5'-[AG]TAAA[TC]A-3'.</text>
</comment>
<comment type="subcellular location">
    <subcellularLocation>
        <location>Nucleus</location>
    </subcellularLocation>
</comment>
<comment type="tissue specificity">
    <text evidence="3">Expressed in early blastoderm embryos in anterior and posterior gut precursors, and, later in a subset of cells in central nervous system.</text>
</comment>
<comment type="developmental stage">
    <text evidence="3">Expressed throughout embryogenesis, maximally during the 5-12 hours period.</text>
</comment>
<reference key="1">
    <citation type="journal article" date="1995" name="EMBO J.">
        <title>The Drosophila fork head domain protein crocodile is required for the establishment of head structures.</title>
        <authorList>
            <person name="Haecker U."/>
            <person name="Kaufmann E."/>
            <person name="Hartmann C."/>
            <person name="Juergens G."/>
            <person name="Knoechel W."/>
            <person name="Jaeckle H."/>
        </authorList>
    </citation>
    <scope>NUCLEOTIDE SEQUENCE</scope>
    <source>
        <strain>Canton-S</strain>
    </source>
</reference>
<reference key="2">
    <citation type="journal article" date="2000" name="Science">
        <title>The genome sequence of Drosophila melanogaster.</title>
        <authorList>
            <person name="Adams M.D."/>
            <person name="Celniker S.E."/>
            <person name="Holt R.A."/>
            <person name="Evans C.A."/>
            <person name="Gocayne J.D."/>
            <person name="Amanatides P.G."/>
            <person name="Scherer S.E."/>
            <person name="Li P.W."/>
            <person name="Hoskins R.A."/>
            <person name="Galle R.F."/>
            <person name="George R.A."/>
            <person name="Lewis S.E."/>
            <person name="Richards S."/>
            <person name="Ashburner M."/>
            <person name="Henderson S.N."/>
            <person name="Sutton G.G."/>
            <person name="Wortman J.R."/>
            <person name="Yandell M.D."/>
            <person name="Zhang Q."/>
            <person name="Chen L.X."/>
            <person name="Brandon R.C."/>
            <person name="Rogers Y.-H.C."/>
            <person name="Blazej R.G."/>
            <person name="Champe M."/>
            <person name="Pfeiffer B.D."/>
            <person name="Wan K.H."/>
            <person name="Doyle C."/>
            <person name="Baxter E.G."/>
            <person name="Helt G."/>
            <person name="Nelson C.R."/>
            <person name="Miklos G.L.G."/>
            <person name="Abril J.F."/>
            <person name="Agbayani A."/>
            <person name="An H.-J."/>
            <person name="Andrews-Pfannkoch C."/>
            <person name="Baldwin D."/>
            <person name="Ballew R.M."/>
            <person name="Basu A."/>
            <person name="Baxendale J."/>
            <person name="Bayraktaroglu L."/>
            <person name="Beasley E.M."/>
            <person name="Beeson K.Y."/>
            <person name="Benos P.V."/>
            <person name="Berman B.P."/>
            <person name="Bhandari D."/>
            <person name="Bolshakov S."/>
            <person name="Borkova D."/>
            <person name="Botchan M.R."/>
            <person name="Bouck J."/>
            <person name="Brokstein P."/>
            <person name="Brottier P."/>
            <person name="Burtis K.C."/>
            <person name="Busam D.A."/>
            <person name="Butler H."/>
            <person name="Cadieu E."/>
            <person name="Center A."/>
            <person name="Chandra I."/>
            <person name="Cherry J.M."/>
            <person name="Cawley S."/>
            <person name="Dahlke C."/>
            <person name="Davenport L.B."/>
            <person name="Davies P."/>
            <person name="de Pablos B."/>
            <person name="Delcher A."/>
            <person name="Deng Z."/>
            <person name="Mays A.D."/>
            <person name="Dew I."/>
            <person name="Dietz S.M."/>
            <person name="Dodson K."/>
            <person name="Doup L.E."/>
            <person name="Downes M."/>
            <person name="Dugan-Rocha S."/>
            <person name="Dunkov B.C."/>
            <person name="Dunn P."/>
            <person name="Durbin K.J."/>
            <person name="Evangelista C.C."/>
            <person name="Ferraz C."/>
            <person name="Ferriera S."/>
            <person name="Fleischmann W."/>
            <person name="Fosler C."/>
            <person name="Gabrielian A.E."/>
            <person name="Garg N.S."/>
            <person name="Gelbart W.M."/>
            <person name="Glasser K."/>
            <person name="Glodek A."/>
            <person name="Gong F."/>
            <person name="Gorrell J.H."/>
            <person name="Gu Z."/>
            <person name="Guan P."/>
            <person name="Harris M."/>
            <person name="Harris N.L."/>
            <person name="Harvey D.A."/>
            <person name="Heiman T.J."/>
            <person name="Hernandez J.R."/>
            <person name="Houck J."/>
            <person name="Hostin D."/>
            <person name="Houston K.A."/>
            <person name="Howland T.J."/>
            <person name="Wei M.-H."/>
            <person name="Ibegwam C."/>
            <person name="Jalali M."/>
            <person name="Kalush F."/>
            <person name="Karpen G.H."/>
            <person name="Ke Z."/>
            <person name="Kennison J.A."/>
            <person name="Ketchum K.A."/>
            <person name="Kimmel B.E."/>
            <person name="Kodira C.D."/>
            <person name="Kraft C.L."/>
            <person name="Kravitz S."/>
            <person name="Kulp D."/>
            <person name="Lai Z."/>
            <person name="Lasko P."/>
            <person name="Lei Y."/>
            <person name="Levitsky A.A."/>
            <person name="Li J.H."/>
            <person name="Li Z."/>
            <person name="Liang Y."/>
            <person name="Lin X."/>
            <person name="Liu X."/>
            <person name="Mattei B."/>
            <person name="McIntosh T.C."/>
            <person name="McLeod M.P."/>
            <person name="McPherson D."/>
            <person name="Merkulov G."/>
            <person name="Milshina N.V."/>
            <person name="Mobarry C."/>
            <person name="Morris J."/>
            <person name="Moshrefi A."/>
            <person name="Mount S.M."/>
            <person name="Moy M."/>
            <person name="Murphy B."/>
            <person name="Murphy L."/>
            <person name="Muzny D.M."/>
            <person name="Nelson D.L."/>
            <person name="Nelson D.R."/>
            <person name="Nelson K.A."/>
            <person name="Nixon K."/>
            <person name="Nusskern D.R."/>
            <person name="Pacleb J.M."/>
            <person name="Palazzolo M."/>
            <person name="Pittman G.S."/>
            <person name="Pan S."/>
            <person name="Pollard J."/>
            <person name="Puri V."/>
            <person name="Reese M.G."/>
            <person name="Reinert K."/>
            <person name="Remington K."/>
            <person name="Saunders R.D.C."/>
            <person name="Scheeler F."/>
            <person name="Shen H."/>
            <person name="Shue B.C."/>
            <person name="Siden-Kiamos I."/>
            <person name="Simpson M."/>
            <person name="Skupski M.P."/>
            <person name="Smith T.J."/>
            <person name="Spier E."/>
            <person name="Spradling A.C."/>
            <person name="Stapleton M."/>
            <person name="Strong R."/>
            <person name="Sun E."/>
            <person name="Svirskas R."/>
            <person name="Tector C."/>
            <person name="Turner R."/>
            <person name="Venter E."/>
            <person name="Wang A.H."/>
            <person name="Wang X."/>
            <person name="Wang Z.-Y."/>
            <person name="Wassarman D.A."/>
            <person name="Weinstock G.M."/>
            <person name="Weissenbach J."/>
            <person name="Williams S.M."/>
            <person name="Woodage T."/>
            <person name="Worley K.C."/>
            <person name="Wu D."/>
            <person name="Yang S."/>
            <person name="Yao Q.A."/>
            <person name="Ye J."/>
            <person name="Yeh R.-F."/>
            <person name="Zaveri J.S."/>
            <person name="Zhan M."/>
            <person name="Zhang G."/>
            <person name="Zhao Q."/>
            <person name="Zheng L."/>
            <person name="Zheng X.H."/>
            <person name="Zhong F.N."/>
            <person name="Zhong W."/>
            <person name="Zhou X."/>
            <person name="Zhu S.C."/>
            <person name="Zhu X."/>
            <person name="Smith H.O."/>
            <person name="Gibbs R.A."/>
            <person name="Myers E.W."/>
            <person name="Rubin G.M."/>
            <person name="Venter J.C."/>
        </authorList>
    </citation>
    <scope>NUCLEOTIDE SEQUENCE [LARGE SCALE GENOMIC DNA]</scope>
    <source>
        <strain>Berkeley</strain>
    </source>
</reference>
<reference key="3">
    <citation type="journal article" date="2002" name="Genome Biol.">
        <title>Annotation of the Drosophila melanogaster euchromatic genome: a systematic review.</title>
        <authorList>
            <person name="Misra S."/>
            <person name="Crosby M.A."/>
            <person name="Mungall C.J."/>
            <person name="Matthews B.B."/>
            <person name="Campbell K.S."/>
            <person name="Hradecky P."/>
            <person name="Huang Y."/>
            <person name="Kaminker J.S."/>
            <person name="Millburn G.H."/>
            <person name="Prochnik S.E."/>
            <person name="Smith C.D."/>
            <person name="Tupy J.L."/>
            <person name="Whitfield E.J."/>
            <person name="Bayraktaroglu L."/>
            <person name="Berman B.P."/>
            <person name="Bettencourt B.R."/>
            <person name="Celniker S.E."/>
            <person name="de Grey A.D.N.J."/>
            <person name="Drysdale R.A."/>
            <person name="Harris N.L."/>
            <person name="Richter J."/>
            <person name="Russo S."/>
            <person name="Schroeder A.J."/>
            <person name="Shu S.Q."/>
            <person name="Stapleton M."/>
            <person name="Yamada C."/>
            <person name="Ashburner M."/>
            <person name="Gelbart W.M."/>
            <person name="Rubin G.M."/>
            <person name="Lewis S.E."/>
        </authorList>
    </citation>
    <scope>GENOME REANNOTATION</scope>
    <source>
        <strain>Berkeley</strain>
    </source>
</reference>
<reference key="4">
    <citation type="journal article" date="1992" name="Proc. Natl. Acad. Sci. U.S.A.">
        <title>Developmentally regulated Drosophila gene family encoding the fork head domain.</title>
        <authorList>
            <person name="Haecker U."/>
            <person name="Grossniklaus U."/>
            <person name="Gehring W.J."/>
            <person name="Jaeckle H."/>
        </authorList>
    </citation>
    <scope>NUCLEOTIDE SEQUENCE [GENOMIC DNA] OF 55-182</scope>
    <scope>FUNCTION</scope>
    <scope>TISSUE SPECIFICITY</scope>
    <scope>DEVELOPMENTAL STAGE</scope>
</reference>
<organism>
    <name type="scientific">Drosophila melanogaster</name>
    <name type="common">Fruit fly</name>
    <dbReference type="NCBI Taxonomy" id="7227"/>
    <lineage>
        <taxon>Eukaryota</taxon>
        <taxon>Metazoa</taxon>
        <taxon>Ecdysozoa</taxon>
        <taxon>Arthropoda</taxon>
        <taxon>Hexapoda</taxon>
        <taxon>Insecta</taxon>
        <taxon>Pterygota</taxon>
        <taxon>Neoptera</taxon>
        <taxon>Endopterygota</taxon>
        <taxon>Diptera</taxon>
        <taxon>Brachycera</taxon>
        <taxon>Muscomorpha</taxon>
        <taxon>Ephydroidea</taxon>
        <taxon>Drosophilidae</taxon>
        <taxon>Drosophila</taxon>
        <taxon>Sophophora</taxon>
    </lineage>
</organism>
<proteinExistence type="evidence at transcript level"/>
<keyword id="KW-0217">Developmental protein</keyword>
<keyword id="KW-0238">DNA-binding</keyword>
<keyword id="KW-0539">Nucleus</keyword>
<keyword id="KW-1185">Reference proteome</keyword>
<keyword id="KW-0804">Transcription</keyword>
<keyword id="KW-0805">Transcription regulation</keyword>
<evidence type="ECO:0000255" key="1">
    <source>
        <dbReference type="PROSITE-ProRule" id="PRU00089"/>
    </source>
</evidence>
<evidence type="ECO:0000256" key="2">
    <source>
        <dbReference type="SAM" id="MobiDB-lite"/>
    </source>
</evidence>
<evidence type="ECO:0000269" key="3">
    <source>
    </source>
</evidence>
<gene>
    <name type="primary">croc</name>
    <name type="synonym">FD1</name>
    <name type="synonym">FD78E</name>
    <name type="ORF">CG5069</name>
</gene>